<accession>B0BAN6</accession>
<sequence>MSVEVEYLQHEDYLYRTSKLKEIRDLGINPYPYQYTDCLEVQEIRNQFVDNELGDSEAAFRKETPKVRFAGRLVLFRSMGKNAFGQILDNDAKIQVMFNRDFSAVAGLAADAGISPIKFIEKKLDLGDILGLEGYLFFTHSGELTVLVETVTLLCKSLISLPDKHAGLADKEIRYRKRWADLISSEDVRKTFLTRSRILKLIREYMDQQSFLEVETPILQTVYGGAEATPFVTTLQALHAEMFLRISLEIALKKLLVGGMSRVYEIGKVFRNEGIDRTHNPEFTMIEAYAAYWDYNDVMKCVENLVEYIVRALNNGETQVQYSHLKSGPQVVDFKAPWIRMTMKESISVYGGVDVDLHADHELRKILETQTSLPEKTYVHASRGELIALLFDELVCDKLIAPHHITDHPLETTPLCKTLRSGDETLVERFESFCLGKELCNAYSELNDPLQQRKLLEEQMRKKALNPDSEYHPIDEEFLEALCQGMPPAGGFGIGIDRLVMMLTDAASIRDVLFFPVMRRIEAKKD</sequence>
<feature type="chain" id="PRO_1000101108" description="Lysine--tRNA ligase">
    <location>
        <begin position="1"/>
        <end position="526"/>
    </location>
</feature>
<feature type="binding site" evidence="1">
    <location>
        <position position="431"/>
    </location>
    <ligand>
        <name>Mg(2+)</name>
        <dbReference type="ChEBI" id="CHEBI:18420"/>
        <label>1</label>
    </ligand>
</feature>
<feature type="binding site" evidence="1">
    <location>
        <position position="438"/>
    </location>
    <ligand>
        <name>Mg(2+)</name>
        <dbReference type="ChEBI" id="CHEBI:18420"/>
        <label>1</label>
    </ligand>
</feature>
<feature type="binding site" evidence="1">
    <location>
        <position position="438"/>
    </location>
    <ligand>
        <name>Mg(2+)</name>
        <dbReference type="ChEBI" id="CHEBI:18420"/>
        <label>2</label>
    </ligand>
</feature>
<feature type="helix" evidence="2">
    <location>
        <begin position="7"/>
        <end position="9"/>
    </location>
</feature>
<feature type="helix" evidence="2">
    <location>
        <begin position="11"/>
        <end position="25"/>
    </location>
</feature>
<feature type="helix" evidence="2">
    <location>
        <begin position="41"/>
        <end position="48"/>
    </location>
</feature>
<feature type="strand" evidence="3">
    <location>
        <begin position="49"/>
        <end position="51"/>
    </location>
</feature>
<feature type="helix" evidence="2">
    <location>
        <begin position="56"/>
        <end position="60"/>
    </location>
</feature>
<feature type="strand" evidence="2">
    <location>
        <begin position="66"/>
        <end position="79"/>
    </location>
</feature>
<feature type="strand" evidence="2">
    <location>
        <begin position="82"/>
        <end position="89"/>
    </location>
</feature>
<feature type="strand" evidence="2">
    <location>
        <begin position="92"/>
        <end position="99"/>
    </location>
</feature>
<feature type="turn" evidence="2">
    <location>
        <begin position="100"/>
        <end position="102"/>
    </location>
</feature>
<feature type="strand" evidence="2">
    <location>
        <begin position="112"/>
        <end position="114"/>
    </location>
</feature>
<feature type="helix" evidence="2">
    <location>
        <begin position="116"/>
        <end position="122"/>
    </location>
</feature>
<feature type="strand" evidence="2">
    <location>
        <begin position="129"/>
        <end position="138"/>
    </location>
</feature>
<feature type="strand" evidence="2">
    <location>
        <begin position="144"/>
        <end position="155"/>
    </location>
</feature>
<feature type="helix" evidence="2">
    <location>
        <begin position="168"/>
        <end position="176"/>
    </location>
</feature>
<feature type="helix" evidence="2">
    <location>
        <begin position="178"/>
        <end position="184"/>
    </location>
</feature>
<feature type="helix" evidence="2">
    <location>
        <begin position="186"/>
        <end position="208"/>
    </location>
</feature>
<feature type="strand" evidence="2">
    <location>
        <begin position="218"/>
        <end position="221"/>
    </location>
</feature>
<feature type="strand" evidence="2">
    <location>
        <begin position="225"/>
        <end position="227"/>
    </location>
</feature>
<feature type="strand" evidence="2">
    <location>
        <begin position="232"/>
        <end position="235"/>
    </location>
</feature>
<feature type="turn" evidence="2">
    <location>
        <begin position="236"/>
        <end position="239"/>
    </location>
</feature>
<feature type="strand" evidence="2">
    <location>
        <begin position="240"/>
        <end position="244"/>
    </location>
</feature>
<feature type="helix" evidence="2">
    <location>
        <begin position="249"/>
        <end position="257"/>
    </location>
</feature>
<feature type="strand" evidence="2">
    <location>
        <begin position="261"/>
        <end position="270"/>
    </location>
</feature>
<feature type="strand" evidence="2">
    <location>
        <begin position="281"/>
        <end position="291"/>
    </location>
</feature>
<feature type="helix" evidence="2">
    <location>
        <begin position="295"/>
        <end position="313"/>
    </location>
</feature>
<feature type="turn" evidence="2">
    <location>
        <begin position="314"/>
        <end position="316"/>
    </location>
</feature>
<feature type="strand" evidence="2">
    <location>
        <begin position="319"/>
        <end position="322"/>
    </location>
</feature>
<feature type="strand" evidence="2">
    <location>
        <begin position="330"/>
        <end position="333"/>
    </location>
</feature>
<feature type="strand" evidence="2">
    <location>
        <begin position="339"/>
        <end position="342"/>
    </location>
</feature>
<feature type="helix" evidence="2">
    <location>
        <begin position="343"/>
        <end position="349"/>
    </location>
</feature>
<feature type="helix" evidence="2">
    <location>
        <begin position="355"/>
        <end position="357"/>
    </location>
</feature>
<feature type="helix" evidence="2">
    <location>
        <begin position="360"/>
        <end position="370"/>
    </location>
</feature>
<feature type="helix" evidence="2">
    <location>
        <begin position="375"/>
        <end position="378"/>
    </location>
</feature>
<feature type="helix" evidence="2">
    <location>
        <begin position="383"/>
        <end position="394"/>
    </location>
</feature>
<feature type="helix" evidence="2">
    <location>
        <begin position="396"/>
        <end position="398"/>
    </location>
</feature>
<feature type="strand" evidence="2">
    <location>
        <begin position="403"/>
        <end position="409"/>
    </location>
</feature>
<feature type="helix" evidence="2">
    <location>
        <begin position="410"/>
        <end position="412"/>
    </location>
</feature>
<feature type="strand" evidence="2">
    <location>
        <begin position="414"/>
        <end position="416"/>
    </location>
</feature>
<feature type="strand" evidence="2">
    <location>
        <begin position="426"/>
        <end position="434"/>
    </location>
</feature>
<feature type="strand" evidence="2">
    <location>
        <begin position="437"/>
        <end position="445"/>
    </location>
</feature>
<feature type="helix" evidence="2">
    <location>
        <begin position="449"/>
        <end position="463"/>
    </location>
</feature>
<feature type="helix" evidence="2">
    <location>
        <begin position="476"/>
        <end position="485"/>
    </location>
</feature>
<feature type="strand" evidence="2">
    <location>
        <begin position="489"/>
        <end position="495"/>
    </location>
</feature>
<feature type="helix" evidence="2">
    <location>
        <begin position="496"/>
        <end position="503"/>
    </location>
</feature>
<feature type="helix" evidence="2">
    <location>
        <begin position="509"/>
        <end position="512"/>
    </location>
</feature>
<feature type="strand" evidence="2">
    <location>
        <begin position="513"/>
        <end position="515"/>
    </location>
</feature>
<proteinExistence type="evidence at protein level"/>
<protein>
    <recommendedName>
        <fullName evidence="1">Lysine--tRNA ligase</fullName>
        <ecNumber evidence="1">6.1.1.6</ecNumber>
    </recommendedName>
    <alternativeName>
        <fullName evidence="1">Lysyl-tRNA synthetase</fullName>
        <shortName evidence="1">LysRS</shortName>
    </alternativeName>
</protein>
<reference key="1">
    <citation type="journal article" date="2008" name="Genome Res.">
        <title>Chlamydia trachomatis: genome sequence analysis of lymphogranuloma venereum isolates.</title>
        <authorList>
            <person name="Thomson N.R."/>
            <person name="Holden M.T.G."/>
            <person name="Carder C."/>
            <person name="Lennard N."/>
            <person name="Lockey S.J."/>
            <person name="Marsh P."/>
            <person name="Skipp P."/>
            <person name="O'Connor C.D."/>
            <person name="Goodhead I."/>
            <person name="Norbertzcak H."/>
            <person name="Harris B."/>
            <person name="Ormond D."/>
            <person name="Rance R."/>
            <person name="Quail M.A."/>
            <person name="Parkhill J."/>
            <person name="Stephens R.S."/>
            <person name="Clarke I.N."/>
        </authorList>
    </citation>
    <scope>NUCLEOTIDE SEQUENCE [LARGE SCALE GENOMIC DNA]</scope>
    <source>
        <strain>UCH-1/proctitis</strain>
    </source>
</reference>
<gene>
    <name evidence="1" type="primary">lysS</name>
    <name type="ordered locus">CTLon_0150</name>
</gene>
<name>SYK_CHLTB</name>
<evidence type="ECO:0000255" key="1">
    <source>
        <dbReference type="HAMAP-Rule" id="MF_00252"/>
    </source>
</evidence>
<evidence type="ECO:0007829" key="2">
    <source>
        <dbReference type="PDB" id="6NRZ"/>
    </source>
</evidence>
<evidence type="ECO:0007829" key="3">
    <source>
        <dbReference type="PDB" id="6O3F"/>
    </source>
</evidence>
<organism>
    <name type="scientific">Chlamydia trachomatis serovar L2b (strain UCH-1/proctitis)</name>
    <dbReference type="NCBI Taxonomy" id="471473"/>
    <lineage>
        <taxon>Bacteria</taxon>
        <taxon>Pseudomonadati</taxon>
        <taxon>Chlamydiota</taxon>
        <taxon>Chlamydiia</taxon>
        <taxon>Chlamydiales</taxon>
        <taxon>Chlamydiaceae</taxon>
        <taxon>Chlamydia/Chlamydophila group</taxon>
        <taxon>Chlamydia</taxon>
    </lineage>
</organism>
<keyword id="KW-0002">3D-structure</keyword>
<keyword id="KW-0030">Aminoacyl-tRNA synthetase</keyword>
<keyword id="KW-0067">ATP-binding</keyword>
<keyword id="KW-0963">Cytoplasm</keyword>
<keyword id="KW-0436">Ligase</keyword>
<keyword id="KW-0460">Magnesium</keyword>
<keyword id="KW-0479">Metal-binding</keyword>
<keyword id="KW-0547">Nucleotide-binding</keyword>
<keyword id="KW-0648">Protein biosynthesis</keyword>
<comment type="catalytic activity">
    <reaction evidence="1">
        <text>tRNA(Lys) + L-lysine + ATP = L-lysyl-tRNA(Lys) + AMP + diphosphate</text>
        <dbReference type="Rhea" id="RHEA:20792"/>
        <dbReference type="Rhea" id="RHEA-COMP:9696"/>
        <dbReference type="Rhea" id="RHEA-COMP:9697"/>
        <dbReference type="ChEBI" id="CHEBI:30616"/>
        <dbReference type="ChEBI" id="CHEBI:32551"/>
        <dbReference type="ChEBI" id="CHEBI:33019"/>
        <dbReference type="ChEBI" id="CHEBI:78442"/>
        <dbReference type="ChEBI" id="CHEBI:78529"/>
        <dbReference type="ChEBI" id="CHEBI:456215"/>
        <dbReference type="EC" id="6.1.1.6"/>
    </reaction>
</comment>
<comment type="cofactor">
    <cofactor evidence="1">
        <name>Mg(2+)</name>
        <dbReference type="ChEBI" id="CHEBI:18420"/>
    </cofactor>
    <text evidence="1">Binds 3 Mg(2+) ions per subunit.</text>
</comment>
<comment type="subunit">
    <text evidence="1">Homodimer.</text>
</comment>
<comment type="subcellular location">
    <subcellularLocation>
        <location evidence="1">Cytoplasm</location>
    </subcellularLocation>
</comment>
<comment type="similarity">
    <text evidence="1">Belongs to the class-II aminoacyl-tRNA synthetase family.</text>
</comment>
<dbReference type="EC" id="6.1.1.6" evidence="1"/>
<dbReference type="EMBL" id="AM884177">
    <property type="protein sequence ID" value="CAP06548.1"/>
    <property type="molecule type" value="Genomic_DNA"/>
</dbReference>
<dbReference type="RefSeq" id="WP_009873399.1">
    <property type="nucleotide sequence ID" value="NC_010280.2"/>
</dbReference>
<dbReference type="PDB" id="6NRZ">
    <property type="method" value="X-ray"/>
    <property type="resolution" value="2.10 A"/>
    <property type="chains" value="A/B=1-526"/>
</dbReference>
<dbReference type="PDB" id="6NS0">
    <property type="method" value="X-ray"/>
    <property type="resolution" value="2.20 A"/>
    <property type="chains" value="A/B=1-526"/>
</dbReference>
<dbReference type="PDB" id="6O3F">
    <property type="method" value="X-ray"/>
    <property type="resolution" value="2.40 A"/>
    <property type="chains" value="A/B=1-521"/>
</dbReference>
<dbReference type="PDBsum" id="6NRZ"/>
<dbReference type="PDBsum" id="6NS0"/>
<dbReference type="PDBsum" id="6O3F"/>
<dbReference type="SMR" id="B0BAN6"/>
<dbReference type="KEGG" id="ctl:CTLon_0150"/>
<dbReference type="HOGENOM" id="CLU_008255_6_0_0"/>
<dbReference type="Proteomes" id="UP001154401">
    <property type="component" value="Chromosome"/>
</dbReference>
<dbReference type="GO" id="GO:0005829">
    <property type="term" value="C:cytosol"/>
    <property type="evidence" value="ECO:0007669"/>
    <property type="project" value="TreeGrafter"/>
</dbReference>
<dbReference type="GO" id="GO:0005524">
    <property type="term" value="F:ATP binding"/>
    <property type="evidence" value="ECO:0007669"/>
    <property type="project" value="UniProtKB-UniRule"/>
</dbReference>
<dbReference type="GO" id="GO:0004824">
    <property type="term" value="F:lysine-tRNA ligase activity"/>
    <property type="evidence" value="ECO:0007669"/>
    <property type="project" value="UniProtKB-UniRule"/>
</dbReference>
<dbReference type="GO" id="GO:0000287">
    <property type="term" value="F:magnesium ion binding"/>
    <property type="evidence" value="ECO:0007669"/>
    <property type="project" value="UniProtKB-UniRule"/>
</dbReference>
<dbReference type="GO" id="GO:0000049">
    <property type="term" value="F:tRNA binding"/>
    <property type="evidence" value="ECO:0007669"/>
    <property type="project" value="TreeGrafter"/>
</dbReference>
<dbReference type="GO" id="GO:0006430">
    <property type="term" value="P:lysyl-tRNA aminoacylation"/>
    <property type="evidence" value="ECO:0007669"/>
    <property type="project" value="UniProtKB-UniRule"/>
</dbReference>
<dbReference type="CDD" id="cd04322">
    <property type="entry name" value="LysRS_N"/>
    <property type="match status" value="1"/>
</dbReference>
<dbReference type="FunFam" id="2.40.50.140:FF:000024">
    <property type="entry name" value="Lysine--tRNA ligase"/>
    <property type="match status" value="1"/>
</dbReference>
<dbReference type="FunFam" id="3.30.930.10:FF:000165">
    <property type="entry name" value="Lysine--tRNA ligase"/>
    <property type="match status" value="1"/>
</dbReference>
<dbReference type="Gene3D" id="3.30.930.10">
    <property type="entry name" value="Bira Bifunctional Protein, Domain 2"/>
    <property type="match status" value="1"/>
</dbReference>
<dbReference type="Gene3D" id="2.40.50.140">
    <property type="entry name" value="Nucleic acid-binding proteins"/>
    <property type="match status" value="1"/>
</dbReference>
<dbReference type="HAMAP" id="MF_00252">
    <property type="entry name" value="Lys_tRNA_synth_class2"/>
    <property type="match status" value="1"/>
</dbReference>
<dbReference type="InterPro" id="IPR004364">
    <property type="entry name" value="Aa-tRNA-synt_II"/>
</dbReference>
<dbReference type="InterPro" id="IPR006195">
    <property type="entry name" value="aa-tRNA-synth_II"/>
</dbReference>
<dbReference type="InterPro" id="IPR045864">
    <property type="entry name" value="aa-tRNA-synth_II/BPL/LPL"/>
</dbReference>
<dbReference type="InterPro" id="IPR002313">
    <property type="entry name" value="Lys-tRNA-ligase_II"/>
</dbReference>
<dbReference type="InterPro" id="IPR044136">
    <property type="entry name" value="Lys-tRNA-ligase_II_N"/>
</dbReference>
<dbReference type="InterPro" id="IPR018149">
    <property type="entry name" value="Lys-tRNA-synth_II_C"/>
</dbReference>
<dbReference type="InterPro" id="IPR012340">
    <property type="entry name" value="NA-bd_OB-fold"/>
</dbReference>
<dbReference type="InterPro" id="IPR004365">
    <property type="entry name" value="NA-bd_OB_tRNA"/>
</dbReference>
<dbReference type="NCBIfam" id="TIGR00499">
    <property type="entry name" value="lysS_bact"/>
    <property type="match status" value="1"/>
</dbReference>
<dbReference type="NCBIfam" id="NF001756">
    <property type="entry name" value="PRK00484.1"/>
    <property type="match status" value="1"/>
</dbReference>
<dbReference type="PANTHER" id="PTHR42918:SF15">
    <property type="entry name" value="LYSINE--TRNA LIGASE, CHLOROPLASTIC_MITOCHONDRIAL"/>
    <property type="match status" value="1"/>
</dbReference>
<dbReference type="PANTHER" id="PTHR42918">
    <property type="entry name" value="LYSYL-TRNA SYNTHETASE"/>
    <property type="match status" value="1"/>
</dbReference>
<dbReference type="Pfam" id="PF00152">
    <property type="entry name" value="tRNA-synt_2"/>
    <property type="match status" value="1"/>
</dbReference>
<dbReference type="Pfam" id="PF01336">
    <property type="entry name" value="tRNA_anti-codon"/>
    <property type="match status" value="1"/>
</dbReference>
<dbReference type="PRINTS" id="PR00982">
    <property type="entry name" value="TRNASYNTHLYS"/>
</dbReference>
<dbReference type="SUPFAM" id="SSF55681">
    <property type="entry name" value="Class II aaRS and biotin synthetases"/>
    <property type="match status" value="1"/>
</dbReference>
<dbReference type="SUPFAM" id="SSF50249">
    <property type="entry name" value="Nucleic acid-binding proteins"/>
    <property type="match status" value="1"/>
</dbReference>
<dbReference type="PROSITE" id="PS50862">
    <property type="entry name" value="AA_TRNA_LIGASE_II"/>
    <property type="match status" value="1"/>
</dbReference>